<gene>
    <name evidence="1" type="primary">murG</name>
    <name type="ordered locus">DR_0626</name>
</gene>
<sequence length="398" mass="42117">MSLVVMATGGTGGHIYPAVATAKELRGRGYEVALMGQKGGMEEGIAEREGLTFYGVDAGKLARSGQGRPDPRQLLKAGQGLAQARRTLAGLNPAAVVGYGGFASLPGVLAAQSLGIPTILHEQNARLGLTQRLAVRRARAVGTAYDKVIGLDPRKATLVGMPVREERMPRAEALAALGLRDGPITIMVMGGSQGSLYLNQQVPGILWRLFGKVGKLRGKGDSVPPIDLDLRGPHLIENARSREVQVLHATGPRWLAEVQPKVENLPWYHVTGYVDAVAAWSVADLGITRAGTGTLAEAAFHGVPLVMVPLPESAENHQYHNAVAVEQAGAGRVVEQKVLPETLEKVVLECAAPGKRAAMRDAAQKRARPGAAARFADLIEVQLRRAPSPTAHAPTAHD</sequence>
<feature type="chain" id="PRO_0000315090" description="UDP-N-acetylglucosamine--N-acetylmuramyl-(pentapeptide) pyrophosphoryl-undecaprenol N-acetylglucosamine transferase">
    <location>
        <begin position="1"/>
        <end position="398"/>
    </location>
</feature>
<feature type="binding site" evidence="1">
    <location>
        <begin position="11"/>
        <end position="13"/>
    </location>
    <ligand>
        <name>UDP-N-acetyl-alpha-D-glucosamine</name>
        <dbReference type="ChEBI" id="CHEBI:57705"/>
    </ligand>
</feature>
<feature type="binding site" evidence="1">
    <location>
        <position position="124"/>
    </location>
    <ligand>
        <name>UDP-N-acetyl-alpha-D-glucosamine</name>
        <dbReference type="ChEBI" id="CHEBI:57705"/>
    </ligand>
</feature>
<feature type="binding site" evidence="1">
    <location>
        <position position="164"/>
    </location>
    <ligand>
        <name>UDP-N-acetyl-alpha-D-glucosamine</name>
        <dbReference type="ChEBI" id="CHEBI:57705"/>
    </ligand>
</feature>
<feature type="binding site" evidence="1">
    <location>
        <position position="192"/>
    </location>
    <ligand>
        <name>UDP-N-acetyl-alpha-D-glucosamine</name>
        <dbReference type="ChEBI" id="CHEBI:57705"/>
    </ligand>
</feature>
<feature type="binding site" evidence="1">
    <location>
        <position position="318"/>
    </location>
    <ligand>
        <name>UDP-N-acetyl-alpha-D-glucosamine</name>
        <dbReference type="ChEBI" id="CHEBI:57705"/>
    </ligand>
</feature>
<accession>Q9RWP0</accession>
<organism>
    <name type="scientific">Deinococcus radiodurans (strain ATCC 13939 / DSM 20539 / JCM 16871 / CCUG 27074 / LMG 4051 / NBRC 15346 / NCIMB 9279 / VKM B-1422 / R1)</name>
    <dbReference type="NCBI Taxonomy" id="243230"/>
    <lineage>
        <taxon>Bacteria</taxon>
        <taxon>Thermotogati</taxon>
        <taxon>Deinococcota</taxon>
        <taxon>Deinococci</taxon>
        <taxon>Deinococcales</taxon>
        <taxon>Deinococcaceae</taxon>
        <taxon>Deinococcus</taxon>
    </lineage>
</organism>
<comment type="function">
    <text evidence="1">Cell wall formation. Catalyzes the transfer of a GlcNAc subunit on undecaprenyl-pyrophosphoryl-MurNAc-pentapeptide (lipid intermediate I) to form undecaprenyl-pyrophosphoryl-MurNAc-(pentapeptide)GlcNAc (lipid intermediate II).</text>
</comment>
<comment type="catalytic activity">
    <reaction evidence="1">
        <text>di-trans,octa-cis-undecaprenyl diphospho-N-acetyl-alpha-D-muramoyl-L-alanyl-D-glutamyl-meso-2,6-diaminopimeloyl-D-alanyl-D-alanine + UDP-N-acetyl-alpha-D-glucosamine = di-trans,octa-cis-undecaprenyl diphospho-[N-acetyl-alpha-D-glucosaminyl-(1-&gt;4)]-N-acetyl-alpha-D-muramoyl-L-alanyl-D-glutamyl-meso-2,6-diaminopimeloyl-D-alanyl-D-alanine + UDP + H(+)</text>
        <dbReference type="Rhea" id="RHEA:31227"/>
        <dbReference type="ChEBI" id="CHEBI:15378"/>
        <dbReference type="ChEBI" id="CHEBI:57705"/>
        <dbReference type="ChEBI" id="CHEBI:58223"/>
        <dbReference type="ChEBI" id="CHEBI:61387"/>
        <dbReference type="ChEBI" id="CHEBI:61388"/>
        <dbReference type="EC" id="2.4.1.227"/>
    </reaction>
</comment>
<comment type="pathway">
    <text evidence="1">Cell wall biogenesis; peptidoglycan biosynthesis.</text>
</comment>
<comment type="subcellular location">
    <subcellularLocation>
        <location evidence="1">Cell membrane</location>
        <topology evidence="1">Peripheral membrane protein</topology>
        <orientation evidence="1">Cytoplasmic side</orientation>
    </subcellularLocation>
</comment>
<comment type="similarity">
    <text evidence="1">Belongs to the glycosyltransferase 28 family. MurG subfamily.</text>
</comment>
<comment type="sequence caution" evidence="2">
    <conflict type="erroneous initiation">
        <sequence resource="EMBL-CDS" id="AAF10204"/>
    </conflict>
</comment>
<protein>
    <recommendedName>
        <fullName evidence="1">UDP-N-acetylglucosamine--N-acetylmuramyl-(pentapeptide) pyrophosphoryl-undecaprenol N-acetylglucosamine transferase</fullName>
        <ecNumber evidence="1">2.4.1.227</ecNumber>
    </recommendedName>
    <alternativeName>
        <fullName evidence="1">Undecaprenyl-PP-MurNAc-pentapeptide-UDPGlcNAc GlcNAc transferase</fullName>
    </alternativeName>
</protein>
<dbReference type="EC" id="2.4.1.227" evidence="1"/>
<dbReference type="EMBL" id="AE000513">
    <property type="protein sequence ID" value="AAF10204.1"/>
    <property type="status" value="ALT_INIT"/>
    <property type="molecule type" value="Genomic_DNA"/>
</dbReference>
<dbReference type="PIR" id="G75496">
    <property type="entry name" value="G75496"/>
</dbReference>
<dbReference type="RefSeq" id="NP_294349.1">
    <property type="nucleotide sequence ID" value="NC_001263.1"/>
</dbReference>
<dbReference type="RefSeq" id="WP_034349463.1">
    <property type="nucleotide sequence ID" value="NC_001263.1"/>
</dbReference>
<dbReference type="SMR" id="Q9RWP0"/>
<dbReference type="FunCoup" id="Q9RWP0">
    <property type="interactions" value="292"/>
</dbReference>
<dbReference type="STRING" id="243230.DR_0626"/>
<dbReference type="CAZy" id="GT28">
    <property type="family name" value="Glycosyltransferase Family 28"/>
</dbReference>
<dbReference type="PaxDb" id="243230-DR_0626"/>
<dbReference type="EnsemblBacteria" id="AAF10204">
    <property type="protein sequence ID" value="AAF10204"/>
    <property type="gene ID" value="DR_0626"/>
</dbReference>
<dbReference type="GeneID" id="69516872"/>
<dbReference type="KEGG" id="dra:DR_0626"/>
<dbReference type="PATRIC" id="fig|243230.17.peg.805"/>
<dbReference type="eggNOG" id="COG0707">
    <property type="taxonomic scope" value="Bacteria"/>
</dbReference>
<dbReference type="HOGENOM" id="CLU_037404_2_1_0"/>
<dbReference type="InParanoid" id="Q9RWP0"/>
<dbReference type="OrthoDB" id="9808936at2"/>
<dbReference type="UniPathway" id="UPA00219"/>
<dbReference type="Proteomes" id="UP000002524">
    <property type="component" value="Chromosome 1"/>
</dbReference>
<dbReference type="GO" id="GO:0005886">
    <property type="term" value="C:plasma membrane"/>
    <property type="evidence" value="ECO:0007669"/>
    <property type="project" value="UniProtKB-SubCell"/>
</dbReference>
<dbReference type="GO" id="GO:0016757">
    <property type="term" value="F:glycosyltransferase activity"/>
    <property type="evidence" value="ECO:0000318"/>
    <property type="project" value="GO_Central"/>
</dbReference>
<dbReference type="GO" id="GO:0051991">
    <property type="term" value="F:UDP-N-acetyl-D-glucosamine:N-acetylmuramoyl-L-alanyl-D-glutamyl-meso-2,6-diaminopimelyl-D-alanyl-D-alanine-diphosphoundecaprenol 4-beta-N-acetylglucosaminlytransferase activity"/>
    <property type="evidence" value="ECO:0007669"/>
    <property type="project" value="RHEA"/>
</dbReference>
<dbReference type="GO" id="GO:0050511">
    <property type="term" value="F:undecaprenyldiphospho-muramoylpentapeptide beta-N-acetylglucosaminyltransferase activity"/>
    <property type="evidence" value="ECO:0007669"/>
    <property type="project" value="UniProtKB-UniRule"/>
</dbReference>
<dbReference type="GO" id="GO:0005975">
    <property type="term" value="P:carbohydrate metabolic process"/>
    <property type="evidence" value="ECO:0007669"/>
    <property type="project" value="InterPro"/>
</dbReference>
<dbReference type="GO" id="GO:0051301">
    <property type="term" value="P:cell division"/>
    <property type="evidence" value="ECO:0007669"/>
    <property type="project" value="UniProtKB-KW"/>
</dbReference>
<dbReference type="GO" id="GO:0071555">
    <property type="term" value="P:cell wall organization"/>
    <property type="evidence" value="ECO:0007669"/>
    <property type="project" value="UniProtKB-KW"/>
</dbReference>
<dbReference type="GO" id="GO:0030259">
    <property type="term" value="P:lipid glycosylation"/>
    <property type="evidence" value="ECO:0007669"/>
    <property type="project" value="UniProtKB-UniRule"/>
</dbReference>
<dbReference type="GO" id="GO:0009252">
    <property type="term" value="P:peptidoglycan biosynthetic process"/>
    <property type="evidence" value="ECO:0007669"/>
    <property type="project" value="UniProtKB-UniRule"/>
</dbReference>
<dbReference type="GO" id="GO:0008360">
    <property type="term" value="P:regulation of cell shape"/>
    <property type="evidence" value="ECO:0007669"/>
    <property type="project" value="UniProtKB-KW"/>
</dbReference>
<dbReference type="CDD" id="cd03785">
    <property type="entry name" value="GT28_MurG"/>
    <property type="match status" value="1"/>
</dbReference>
<dbReference type="Gene3D" id="3.40.50.2000">
    <property type="entry name" value="Glycogen Phosphorylase B"/>
    <property type="match status" value="2"/>
</dbReference>
<dbReference type="HAMAP" id="MF_00033">
    <property type="entry name" value="MurG"/>
    <property type="match status" value="1"/>
</dbReference>
<dbReference type="InterPro" id="IPR006009">
    <property type="entry name" value="GlcNAc_MurG"/>
</dbReference>
<dbReference type="InterPro" id="IPR007235">
    <property type="entry name" value="Glyco_trans_28_C"/>
</dbReference>
<dbReference type="InterPro" id="IPR004276">
    <property type="entry name" value="GlycoTrans_28_N"/>
</dbReference>
<dbReference type="NCBIfam" id="TIGR01133">
    <property type="entry name" value="murG"/>
    <property type="match status" value="1"/>
</dbReference>
<dbReference type="PANTHER" id="PTHR21015:SF22">
    <property type="entry name" value="GLYCOSYLTRANSFERASE"/>
    <property type="match status" value="1"/>
</dbReference>
<dbReference type="PANTHER" id="PTHR21015">
    <property type="entry name" value="UDP-N-ACETYLGLUCOSAMINE--N-ACETYLMURAMYL-(PENTAPEPTIDE) PYROPHOSPHORYL-UNDECAPRENOL N-ACETYLGLUCOSAMINE TRANSFERASE 1"/>
    <property type="match status" value="1"/>
</dbReference>
<dbReference type="Pfam" id="PF04101">
    <property type="entry name" value="Glyco_tran_28_C"/>
    <property type="match status" value="1"/>
</dbReference>
<dbReference type="Pfam" id="PF03033">
    <property type="entry name" value="Glyco_transf_28"/>
    <property type="match status" value="1"/>
</dbReference>
<dbReference type="SUPFAM" id="SSF53756">
    <property type="entry name" value="UDP-Glycosyltransferase/glycogen phosphorylase"/>
    <property type="match status" value="1"/>
</dbReference>
<name>MURG_DEIRA</name>
<proteinExistence type="inferred from homology"/>
<reference key="1">
    <citation type="journal article" date="1999" name="Science">
        <title>Genome sequence of the radioresistant bacterium Deinococcus radiodurans R1.</title>
        <authorList>
            <person name="White O."/>
            <person name="Eisen J.A."/>
            <person name="Heidelberg J.F."/>
            <person name="Hickey E.K."/>
            <person name="Peterson J.D."/>
            <person name="Dodson R.J."/>
            <person name="Haft D.H."/>
            <person name="Gwinn M.L."/>
            <person name="Nelson W.C."/>
            <person name="Richardson D.L."/>
            <person name="Moffat K.S."/>
            <person name="Qin H."/>
            <person name="Jiang L."/>
            <person name="Pamphile W."/>
            <person name="Crosby M."/>
            <person name="Shen M."/>
            <person name="Vamathevan J.J."/>
            <person name="Lam P."/>
            <person name="McDonald L.A."/>
            <person name="Utterback T.R."/>
            <person name="Zalewski C."/>
            <person name="Makarova K.S."/>
            <person name="Aravind L."/>
            <person name="Daly M.J."/>
            <person name="Minton K.W."/>
            <person name="Fleischmann R.D."/>
            <person name="Ketchum K.A."/>
            <person name="Nelson K.E."/>
            <person name="Salzberg S.L."/>
            <person name="Smith H.O."/>
            <person name="Venter J.C."/>
            <person name="Fraser C.M."/>
        </authorList>
    </citation>
    <scope>NUCLEOTIDE SEQUENCE [LARGE SCALE GENOMIC DNA]</scope>
    <source>
        <strain>ATCC 13939 / DSM 20539 / JCM 16871 / CCUG 27074 / LMG 4051 / NBRC 15346 / NCIMB 9279 / VKM B-1422 / R1</strain>
    </source>
</reference>
<keyword id="KW-0131">Cell cycle</keyword>
<keyword id="KW-0132">Cell division</keyword>
<keyword id="KW-1003">Cell membrane</keyword>
<keyword id="KW-0133">Cell shape</keyword>
<keyword id="KW-0961">Cell wall biogenesis/degradation</keyword>
<keyword id="KW-0328">Glycosyltransferase</keyword>
<keyword id="KW-0472">Membrane</keyword>
<keyword id="KW-0573">Peptidoglycan synthesis</keyword>
<keyword id="KW-1185">Reference proteome</keyword>
<keyword id="KW-0808">Transferase</keyword>
<evidence type="ECO:0000255" key="1">
    <source>
        <dbReference type="HAMAP-Rule" id="MF_00033"/>
    </source>
</evidence>
<evidence type="ECO:0000305" key="2"/>